<organism>
    <name type="scientific">Homo sapiens</name>
    <name type="common">Human</name>
    <dbReference type="NCBI Taxonomy" id="9606"/>
    <lineage>
        <taxon>Eukaryota</taxon>
        <taxon>Metazoa</taxon>
        <taxon>Chordata</taxon>
        <taxon>Craniata</taxon>
        <taxon>Vertebrata</taxon>
        <taxon>Euteleostomi</taxon>
        <taxon>Mammalia</taxon>
        <taxon>Eutheria</taxon>
        <taxon>Euarchontoglires</taxon>
        <taxon>Primates</taxon>
        <taxon>Haplorrhini</taxon>
        <taxon>Catarrhini</taxon>
        <taxon>Hominidae</taxon>
        <taxon>Homo</taxon>
    </lineage>
</organism>
<proteinExistence type="evidence at protein level"/>
<dbReference type="EMBL" id="AJ011654">
    <property type="protein sequence ID" value="CAA09726.1"/>
    <property type="molecule type" value="mRNA"/>
</dbReference>
<dbReference type="EMBL" id="BT007423">
    <property type="protein sequence ID" value="AAP36091.1"/>
    <property type="molecule type" value="mRNA"/>
</dbReference>
<dbReference type="EMBL" id="AK303308">
    <property type="protein sequence ID" value="BAH13938.1"/>
    <property type="molecule type" value="mRNA"/>
</dbReference>
<dbReference type="EMBL" id="AF196779">
    <property type="status" value="NOT_ANNOTATED_CDS"/>
    <property type="molecule type" value="Genomic_DNA"/>
</dbReference>
<dbReference type="EMBL" id="CH471224">
    <property type="protein sequence ID" value="EAW50686.1"/>
    <property type="molecule type" value="Genomic_DNA"/>
</dbReference>
<dbReference type="EMBL" id="BC002468">
    <property type="protein sequence ID" value="AAH02468.1"/>
    <property type="molecule type" value="mRNA"/>
</dbReference>
<dbReference type="EMBL" id="BC016856">
    <property type="protein sequence ID" value="AAH16856.1"/>
    <property type="molecule type" value="mRNA"/>
</dbReference>
<dbReference type="EMBL" id="U93305">
    <property type="protein sequence ID" value="AAB92357.1"/>
    <property type="molecule type" value="Genomic_DNA"/>
</dbReference>
<dbReference type="CCDS" id="CCDS14320.1">
    <molecule id="O43900-1"/>
</dbReference>
<dbReference type="RefSeq" id="NP_006141.2">
    <molecule id="O43900-1"/>
    <property type="nucleotide sequence ID" value="NM_006150.4"/>
</dbReference>
<dbReference type="SMR" id="O43900"/>
<dbReference type="BioGRID" id="110192">
    <property type="interactions" value="83"/>
</dbReference>
<dbReference type="FunCoup" id="O43900">
    <property type="interactions" value="810"/>
</dbReference>
<dbReference type="IntAct" id="O43900">
    <property type="interactions" value="78"/>
</dbReference>
<dbReference type="STRING" id="9606.ENSP00000470248"/>
<dbReference type="iPTMnet" id="O43900"/>
<dbReference type="PhosphoSitePlus" id="O43900"/>
<dbReference type="BioMuta" id="PRICKLE3"/>
<dbReference type="jPOST" id="O43900"/>
<dbReference type="MassIVE" id="O43900"/>
<dbReference type="PaxDb" id="9606-ENSP00000470248"/>
<dbReference type="PeptideAtlas" id="O43900"/>
<dbReference type="ProteomicsDB" id="49223">
    <molecule id="O43900-1"/>
</dbReference>
<dbReference type="ProteomicsDB" id="6945"/>
<dbReference type="Pumba" id="O43900"/>
<dbReference type="Antibodypedia" id="404">
    <property type="antibodies" value="116 antibodies from 26 providers"/>
</dbReference>
<dbReference type="DNASU" id="4007"/>
<dbReference type="Ensembl" id="ENST00000599218.6">
    <molecule id="O43900-1"/>
    <property type="protein sequence ID" value="ENSP00000470248.1"/>
    <property type="gene ID" value="ENSG00000012211.13"/>
</dbReference>
<dbReference type="GeneID" id="4007"/>
<dbReference type="KEGG" id="hsa:4007"/>
<dbReference type="MANE-Select" id="ENST00000599218.6">
    <property type="protein sequence ID" value="ENSP00000470248.1"/>
    <property type="RefSeq nucleotide sequence ID" value="NM_006150.5"/>
    <property type="RefSeq protein sequence ID" value="NP_006141.2"/>
</dbReference>
<dbReference type="UCSC" id="uc004dmy.2">
    <molecule id="O43900-1"/>
    <property type="organism name" value="human"/>
</dbReference>
<dbReference type="AGR" id="HGNC:6645"/>
<dbReference type="CTD" id="4007"/>
<dbReference type="DisGeNET" id="4007"/>
<dbReference type="GeneCards" id="PRICKLE3"/>
<dbReference type="HGNC" id="HGNC:6645">
    <property type="gene designation" value="PRICKLE3"/>
</dbReference>
<dbReference type="HPA" id="ENSG00000012211">
    <property type="expression patterns" value="Low tissue specificity"/>
</dbReference>
<dbReference type="MalaCards" id="PRICKLE3"/>
<dbReference type="MIM" id="300111">
    <property type="type" value="gene"/>
</dbReference>
<dbReference type="MIM" id="308905">
    <property type="type" value="phenotype"/>
</dbReference>
<dbReference type="neXtProt" id="NX_O43900"/>
<dbReference type="OpenTargets" id="ENSG00000012211"/>
<dbReference type="PharmGKB" id="PA162400060"/>
<dbReference type="VEuPathDB" id="HostDB:ENSG00000012211"/>
<dbReference type="eggNOG" id="KOG1704">
    <property type="taxonomic scope" value="Eukaryota"/>
</dbReference>
<dbReference type="GeneTree" id="ENSGT00940000153629"/>
<dbReference type="HOGENOM" id="CLU_008937_8_1_1"/>
<dbReference type="InParanoid" id="O43900"/>
<dbReference type="OMA" id="GRHRCDL"/>
<dbReference type="OrthoDB" id="10069167at2759"/>
<dbReference type="PAN-GO" id="O43900">
    <property type="GO annotations" value="0 GO annotations based on evolutionary models"/>
</dbReference>
<dbReference type="PhylomeDB" id="O43900"/>
<dbReference type="TreeFam" id="TF313265"/>
<dbReference type="PathwayCommons" id="O43900"/>
<dbReference type="SignaLink" id="O43900"/>
<dbReference type="BioGRID-ORCS" id="4007">
    <property type="hits" value="12 hits in 783 CRISPR screens"/>
</dbReference>
<dbReference type="ChiTaRS" id="PRICKLE3">
    <property type="organism name" value="human"/>
</dbReference>
<dbReference type="GenomeRNAi" id="4007"/>
<dbReference type="Pharos" id="O43900">
    <property type="development level" value="Tbio"/>
</dbReference>
<dbReference type="PRO" id="PR:O43900"/>
<dbReference type="Proteomes" id="UP000005640">
    <property type="component" value="Chromosome X"/>
</dbReference>
<dbReference type="RNAct" id="O43900">
    <property type="molecule type" value="protein"/>
</dbReference>
<dbReference type="Bgee" id="ENSG00000012211">
    <property type="expression patterns" value="Expressed in lower esophagus mucosa and 96 other cell types or tissues"/>
</dbReference>
<dbReference type="ExpressionAtlas" id="O43900">
    <property type="expression patterns" value="baseline and differential"/>
</dbReference>
<dbReference type="GO" id="GO:0005739">
    <property type="term" value="C:mitochondrion"/>
    <property type="evidence" value="ECO:0000314"/>
    <property type="project" value="UniProtKB"/>
</dbReference>
<dbReference type="GO" id="GO:0005886">
    <property type="term" value="C:plasma membrane"/>
    <property type="evidence" value="ECO:0007669"/>
    <property type="project" value="UniProtKB-SubCell"/>
</dbReference>
<dbReference type="GO" id="GO:0008270">
    <property type="term" value="F:zinc ion binding"/>
    <property type="evidence" value="ECO:0007669"/>
    <property type="project" value="InterPro"/>
</dbReference>
<dbReference type="GO" id="GO:0030030">
    <property type="term" value="P:cell projection organization"/>
    <property type="evidence" value="ECO:0007669"/>
    <property type="project" value="UniProtKB-KW"/>
</dbReference>
<dbReference type="CDD" id="cd09415">
    <property type="entry name" value="LIM1_Prickle"/>
    <property type="match status" value="1"/>
</dbReference>
<dbReference type="CDD" id="cd09418">
    <property type="entry name" value="LIM2_Prickle"/>
    <property type="match status" value="1"/>
</dbReference>
<dbReference type="CDD" id="cd09420">
    <property type="entry name" value="LIM3_Prickle"/>
    <property type="match status" value="1"/>
</dbReference>
<dbReference type="CDD" id="cd09827">
    <property type="entry name" value="PET_Prickle"/>
    <property type="match status" value="1"/>
</dbReference>
<dbReference type="FunFam" id="2.10.110.10:FF:000022">
    <property type="entry name" value="prickle-like protein 2 isoform X1"/>
    <property type="match status" value="1"/>
</dbReference>
<dbReference type="FunFam" id="2.10.110.10:FF:000035">
    <property type="entry name" value="prickle-like protein 2 isoform X1"/>
    <property type="match status" value="1"/>
</dbReference>
<dbReference type="FunFam" id="2.10.110.10:FF:000005">
    <property type="entry name" value="Testin isoform 1"/>
    <property type="match status" value="1"/>
</dbReference>
<dbReference type="Gene3D" id="2.10.110.10">
    <property type="entry name" value="Cysteine Rich Protein"/>
    <property type="match status" value="3"/>
</dbReference>
<dbReference type="InterPro" id="IPR033725">
    <property type="entry name" value="LIM1_prickle"/>
</dbReference>
<dbReference type="InterPro" id="IPR033726">
    <property type="entry name" value="LIM2_prickle"/>
</dbReference>
<dbReference type="InterPro" id="IPR033727">
    <property type="entry name" value="LIM3_prickle"/>
</dbReference>
<dbReference type="InterPro" id="IPR010442">
    <property type="entry name" value="PET_domain"/>
</dbReference>
<dbReference type="InterPro" id="IPR033723">
    <property type="entry name" value="PET_prickle"/>
</dbReference>
<dbReference type="InterPro" id="IPR047120">
    <property type="entry name" value="Pk/Esn/Tes"/>
</dbReference>
<dbReference type="InterPro" id="IPR001781">
    <property type="entry name" value="Znf_LIM"/>
</dbReference>
<dbReference type="PANTHER" id="PTHR24211">
    <property type="entry name" value="LIM DOMAIN-CONTAINING PROTEIN"/>
    <property type="match status" value="1"/>
</dbReference>
<dbReference type="PANTHER" id="PTHR24211:SF19">
    <property type="entry name" value="PRICKLE PLANAR CELL POLARITY PROTEIN 3"/>
    <property type="match status" value="1"/>
</dbReference>
<dbReference type="Pfam" id="PF00412">
    <property type="entry name" value="LIM"/>
    <property type="match status" value="3"/>
</dbReference>
<dbReference type="Pfam" id="PF06297">
    <property type="entry name" value="PET"/>
    <property type="match status" value="1"/>
</dbReference>
<dbReference type="SMART" id="SM00132">
    <property type="entry name" value="LIM"/>
    <property type="match status" value="3"/>
</dbReference>
<dbReference type="SUPFAM" id="SSF57716">
    <property type="entry name" value="Glucocorticoid receptor-like (DNA-binding domain)"/>
    <property type="match status" value="2"/>
</dbReference>
<dbReference type="PROSITE" id="PS00478">
    <property type="entry name" value="LIM_DOMAIN_1"/>
    <property type="match status" value="2"/>
</dbReference>
<dbReference type="PROSITE" id="PS50023">
    <property type="entry name" value="LIM_DOMAIN_2"/>
    <property type="match status" value="3"/>
</dbReference>
<dbReference type="PROSITE" id="PS51303">
    <property type="entry name" value="PET"/>
    <property type="match status" value="1"/>
</dbReference>
<sequence>MFARGSRRRRSGRAPPEAEDPDRGQPCNSCREQCPGFLLHGWRKICQHCKCPREEHAVHAVPVDLERIMCRLISDFQRHSISDDDSGCASEEYAWVPPGLKPEQVYQFFSCLPEDKVPYVNSPGEKYRIKQLLHQLPPHDSEAQYCTALEEEEKKELRAFSQQRKRENLGRGIVRIFPVTITGAICEECGKQIGGGDIAVFASRAGLGACWHPQCFVCTTCQELLVDLIYFYHVGKVYCGRHHAECLRPRCQACDEIIFSPECTEAEGRHWHMDHFCCFECEASLGGQRYVMRQSRPHCCACYEARHAEYCDGCGEHIGLDQGQMAYEGQHWHASDRCFCCSRCGRALLGRPFLPRRGLIFCSRACSLGSEPTAPGPSRRSWSAGPVTAPLAASTASFSAVKGASETTTKGTSTELAPATGPEEPSRFLRGAPHRHSMPELGLRSVPEPPPESPGQPNLRPDDSAFGRQSTPRVSFRDPLVSEGGPRRTLSAPPAQRRRPRSPPPRAPSRRRHHHHNHHHHHNRHPSRRRHYQCDAGSGSDSESCSSSPSSSSSESSEDDGFFLGERIPLPPHLCRPMPAQDTAMETFNSPSLSLPRDSRAGMPRQARDKNCIVA</sequence>
<name>PRIC3_HUMAN</name>
<comment type="function">
    <text evidence="1 6">Involved in the planar cell polarity (PCP) pathway that is essential for the polarization of epithelial cells during morphogenetic processes, including gastrulation and neurulation (By similarity). PCP is maintained by two molecular modules, the global and the core modules, PRICKLE3 being part of the core module (By similarity). Distinct complexes of the core module segregate to opposite sides of the cell, where they interact with the opposite complex in the neighboring cell at or near the adherents junctions (By similarity). Involved in the organization of the basal body (By similarity). Involved in cilia growth and positioning (By similarity). Required for proper assembly, stability, and function of mitochondrial membrane ATP synthase (mitochondrial complex V) (PubMed:32516135).</text>
</comment>
<comment type="subunit">
    <text evidence="1 6">Interacts with VANGL2 via its C-terminus (By similarity). The VANGL2-dependent membrane recruitment of PRICKLE3 is a prerequisite for its polarization (By similarity). Interacts with WTIP. WTIP is involved in the recruitment of PRICKLE3 to the basal body (By similarity). Interacts with MT-ATP8, a component of the mitochondrial complex V (PubMed:32516135).</text>
</comment>
<comment type="interaction">
    <interactant intactId="EBI-1751761">
        <id>O43900</id>
    </interactant>
    <interactant intactId="EBI-375543">
        <id>P00519</id>
        <label>ABL1</label>
    </interactant>
    <organismsDiffer>false</organismsDiffer>
    <experiments>2</experiments>
</comment>
<comment type="interaction">
    <interactant intactId="EBI-1751761">
        <id>O43900</id>
    </interactant>
    <interactant intactId="EBI-515315">
        <id>P06241</id>
        <label>FYN</label>
    </interactant>
    <organismsDiffer>false</organismsDiffer>
    <experiments>2</experiments>
</comment>
<comment type="interaction">
    <interactant intactId="EBI-1751761">
        <id>O43900</id>
    </interactant>
    <interactant intactId="EBI-749441">
        <id>O00204</id>
        <label>SULT2B1</label>
    </interactant>
    <organismsDiffer>false</organismsDiffer>
    <experiments>3</experiments>
</comment>
<comment type="subcellular location">
    <subcellularLocation>
        <location evidence="1 6">Cytoplasm</location>
    </subcellularLocation>
    <subcellularLocation>
        <location evidence="1">Cell membrane</location>
        <topology evidence="1">Peripheral membrane protein</topology>
        <orientation evidence="1">Cytoplasmic side</orientation>
    </subcellularLocation>
    <subcellularLocation>
        <location evidence="6">Mitochondrion</location>
    </subcellularLocation>
    <text evidence="1">Recruited by VANGL2 to anterior cell borders. This polarity is controlled by Wnt proteins (By similarity). WTIP is involved in the recruitment of PRICKLE3 to the basal body (By similarity).</text>
</comment>
<comment type="alternative products">
    <event type="alternative splicing"/>
    <isoform>
        <id>O43900-1</id>
        <name>1</name>
        <sequence type="displayed"/>
    </isoform>
    <isoform>
        <id>O43900-2</id>
        <name>2</name>
        <sequence type="described" ref="VSP_056568 VSP_056569"/>
    </isoform>
</comment>
<comment type="tissue specificity">
    <text>Widely expressed.</text>
</comment>
<comment type="disease" evidence="6">
    <disease id="DI-06012">
        <name>Leber hereditary optic neuropathy, modifier</name>
        <acronym>LOAM</acronym>
        <description>A form of Leber hereditary optic neuropathy, a mitochondrial disease resulting in bilateral painless loss of central vision due to selective degeneration of the retinal ganglion cells and their axons. The disorder shows incomplete penetrance and male predominance. Leber hereditary optic neuropathy is maternally inherited in most case and results from primary mitochondrial DNA mutations affecting the respiratory chain complexes. Mutations in modifier genes can influence disease expression. LOAM exhibits increased penetrance and earlier age of onset compared to Leber optic atrophy caused by MTND4 primary mutations, due to the action of mutations in PRICKLE3 as a modifier gene.</description>
        <dbReference type="MIM" id="308905"/>
    </disease>
    <text>The gene represented in this entry acts as a disease modifier.</text>
</comment>
<comment type="similarity">
    <text evidence="8">Belongs to the prickle / espinas / testin family.</text>
</comment>
<accession>O43900</accession>
<accession>B7Z8F2</accession>
<accession>O76007</accession>
<accession>Q53XR5</accession>
<feature type="chain" id="PRO_0000075822" description="Prickle planar cell polarity protein 3">
    <location>
        <begin position="1"/>
        <end position="615"/>
    </location>
</feature>
<feature type="domain" description="PET" evidence="3">
    <location>
        <begin position="74"/>
        <end position="182"/>
    </location>
</feature>
<feature type="domain" description="LIM zinc-binding 1" evidence="2">
    <location>
        <begin position="184"/>
        <end position="249"/>
    </location>
</feature>
<feature type="domain" description="LIM zinc-binding 2" evidence="2">
    <location>
        <begin position="250"/>
        <end position="309"/>
    </location>
</feature>
<feature type="domain" description="LIM zinc-binding 3" evidence="2">
    <location>
        <begin position="310"/>
        <end position="373"/>
    </location>
</feature>
<feature type="region of interest" description="Disordered" evidence="4">
    <location>
        <begin position="1"/>
        <end position="26"/>
    </location>
</feature>
<feature type="region of interest" description="Disordered" evidence="4">
    <location>
        <begin position="396"/>
        <end position="567"/>
    </location>
</feature>
<feature type="region of interest" description="Disordered" evidence="4">
    <location>
        <begin position="587"/>
        <end position="615"/>
    </location>
</feature>
<feature type="compositionally biased region" description="Basic residues" evidence="4">
    <location>
        <begin position="1"/>
        <end position="12"/>
    </location>
</feature>
<feature type="compositionally biased region" description="Polar residues" evidence="4">
    <location>
        <begin position="405"/>
        <end position="415"/>
    </location>
</feature>
<feature type="compositionally biased region" description="Basic residues" evidence="4">
    <location>
        <begin position="508"/>
        <end position="531"/>
    </location>
</feature>
<feature type="compositionally biased region" description="Low complexity" evidence="4">
    <location>
        <begin position="537"/>
        <end position="555"/>
    </location>
</feature>
<feature type="compositionally biased region" description="Basic and acidic residues" evidence="4">
    <location>
        <begin position="606"/>
        <end position="615"/>
    </location>
</feature>
<feature type="modified residue" description="Phosphoserine" evidence="10">
    <location>
        <position position="475"/>
    </location>
</feature>
<feature type="modified residue" description="Phosphoserine" evidence="10">
    <location>
        <position position="491"/>
    </location>
</feature>
<feature type="splice variant" id="VSP_056568" description="In isoform 2." evidence="7">
    <location>
        <begin position="1"/>
        <end position="68"/>
    </location>
</feature>
<feature type="splice variant" id="VSP_056569" description="In isoform 2." evidence="7">
    <original>YQFFSCLPEDKVPYVNSPGEKYRIKQLLHQLPPHDSE</original>
    <variation>TRGQPSTLAVQWVHTNAHTHTHTQ</variation>
    <location>
        <begin position="106"/>
        <end position="142"/>
    </location>
</feature>
<feature type="sequence variant" id="VAR_084628" description="In LOAM; acts as a modifier allele increasing the penetrance and expressivity of LHON-associated mtDNA mutations; reduced protein levels; does not affect localization to mitochondria; results in altered complex V stability and activity; dbSNP:rs2065470015." evidence="6">
    <original>R</original>
    <variation>W</variation>
    <location>
        <position position="53"/>
    </location>
</feature>
<feature type="sequence variant" id="VAR_050169" description="In dbSNP:rs7065449.">
    <original>R</original>
    <variation>C</variation>
    <location>
        <position position="343"/>
    </location>
</feature>
<feature type="sequence variant" id="VAR_036188" description="In a breast cancer sample; somatic mutation." evidence="5">
    <original>E</original>
    <variation>D</variation>
    <location>
        <position position="558"/>
    </location>
</feature>
<feature type="sequence conflict" description="In Ref. 7; AAB92357." evidence="8" ref="7">
    <original>I</original>
    <variation>S</variation>
    <location>
        <position position="185"/>
    </location>
</feature>
<feature type="sequence conflict" description="In Ref. 7; AAB92357." evidence="8" ref="7">
    <location>
        <begin position="370"/>
        <end position="509"/>
    </location>
</feature>
<evidence type="ECO:0000250" key="1">
    <source>
        <dbReference type="UniProtKB" id="A8WH69"/>
    </source>
</evidence>
<evidence type="ECO:0000255" key="2">
    <source>
        <dbReference type="PROSITE-ProRule" id="PRU00125"/>
    </source>
</evidence>
<evidence type="ECO:0000255" key="3">
    <source>
        <dbReference type="PROSITE-ProRule" id="PRU00636"/>
    </source>
</evidence>
<evidence type="ECO:0000256" key="4">
    <source>
        <dbReference type="SAM" id="MobiDB-lite"/>
    </source>
</evidence>
<evidence type="ECO:0000269" key="5">
    <source>
    </source>
</evidence>
<evidence type="ECO:0000269" key="6">
    <source>
    </source>
</evidence>
<evidence type="ECO:0000303" key="7">
    <source>
    </source>
</evidence>
<evidence type="ECO:0000305" key="8"/>
<evidence type="ECO:0000312" key="9">
    <source>
        <dbReference type="HGNC" id="HGNC:6645"/>
    </source>
</evidence>
<evidence type="ECO:0007744" key="10">
    <source>
    </source>
</evidence>
<gene>
    <name evidence="9" type="primary">PRICKLE3</name>
    <name type="synonym">LMO6</name>
</gene>
<keyword id="KW-0025">Alternative splicing</keyword>
<keyword id="KW-1003">Cell membrane</keyword>
<keyword id="KW-0970">Cilium biogenesis/degradation</keyword>
<keyword id="KW-0963">Cytoplasm</keyword>
<keyword id="KW-0217">Developmental protein</keyword>
<keyword id="KW-0225">Disease variant</keyword>
<keyword id="KW-0429">Leber hereditary optic neuropathy</keyword>
<keyword id="KW-0440">LIM domain</keyword>
<keyword id="KW-0472">Membrane</keyword>
<keyword id="KW-0479">Metal-binding</keyword>
<keyword id="KW-0496">Mitochondrion</keyword>
<keyword id="KW-0597">Phosphoprotein</keyword>
<keyword id="KW-1274">Primary mitochondrial disease</keyword>
<keyword id="KW-1267">Proteomics identification</keyword>
<keyword id="KW-1185">Reference proteome</keyword>
<keyword id="KW-0677">Repeat</keyword>
<keyword id="KW-0862">Zinc</keyword>
<reference key="1">
    <citation type="submission" date="1998-09" db="EMBL/GenBank/DDBJ databases">
        <title>Transcription map in Xp11.23.</title>
        <authorList>
            <person name="Strom T.M."/>
            <person name="Gutwillinger N."/>
            <person name="Nyakatura G."/>
            <person name="Hellebrand H."/>
            <person name="Drescher B."/>
            <person name="Rosenthal A."/>
            <person name="Meindl A."/>
        </authorList>
    </citation>
    <scope>NUCLEOTIDE SEQUENCE [LARGE SCALE MRNA] (ISOFORM 1)</scope>
    <source>
        <tissue>Heart</tissue>
    </source>
</reference>
<reference key="2">
    <citation type="submission" date="2003-05" db="EMBL/GenBank/DDBJ databases">
        <title>Cloning of human full-length CDSs in BD Creator(TM) system donor vector.</title>
        <authorList>
            <person name="Kalnine N."/>
            <person name="Chen X."/>
            <person name="Rolfs A."/>
            <person name="Halleck A."/>
            <person name="Hines L."/>
            <person name="Eisenstein S."/>
            <person name="Koundinya M."/>
            <person name="Raphael J."/>
            <person name="Moreira D."/>
            <person name="Kelley T."/>
            <person name="LaBaer J."/>
            <person name="Lin Y."/>
            <person name="Phelan M."/>
            <person name="Farmer A."/>
        </authorList>
    </citation>
    <scope>NUCLEOTIDE SEQUENCE [LARGE SCALE MRNA] (ISOFORM 1)</scope>
</reference>
<reference key="3">
    <citation type="journal article" date="2004" name="Nat. Genet.">
        <title>Complete sequencing and characterization of 21,243 full-length human cDNAs.</title>
        <authorList>
            <person name="Ota T."/>
            <person name="Suzuki Y."/>
            <person name="Nishikawa T."/>
            <person name="Otsuki T."/>
            <person name="Sugiyama T."/>
            <person name="Irie R."/>
            <person name="Wakamatsu A."/>
            <person name="Hayashi K."/>
            <person name="Sato H."/>
            <person name="Nagai K."/>
            <person name="Kimura K."/>
            <person name="Makita H."/>
            <person name="Sekine M."/>
            <person name="Obayashi M."/>
            <person name="Nishi T."/>
            <person name="Shibahara T."/>
            <person name="Tanaka T."/>
            <person name="Ishii S."/>
            <person name="Yamamoto J."/>
            <person name="Saito K."/>
            <person name="Kawai Y."/>
            <person name="Isono Y."/>
            <person name="Nakamura Y."/>
            <person name="Nagahari K."/>
            <person name="Murakami K."/>
            <person name="Yasuda T."/>
            <person name="Iwayanagi T."/>
            <person name="Wagatsuma M."/>
            <person name="Shiratori A."/>
            <person name="Sudo H."/>
            <person name="Hosoiri T."/>
            <person name="Kaku Y."/>
            <person name="Kodaira H."/>
            <person name="Kondo H."/>
            <person name="Sugawara M."/>
            <person name="Takahashi M."/>
            <person name="Kanda K."/>
            <person name="Yokoi T."/>
            <person name="Furuya T."/>
            <person name="Kikkawa E."/>
            <person name="Omura Y."/>
            <person name="Abe K."/>
            <person name="Kamihara K."/>
            <person name="Katsuta N."/>
            <person name="Sato K."/>
            <person name="Tanikawa M."/>
            <person name="Yamazaki M."/>
            <person name="Ninomiya K."/>
            <person name="Ishibashi T."/>
            <person name="Yamashita H."/>
            <person name="Murakawa K."/>
            <person name="Fujimori K."/>
            <person name="Tanai H."/>
            <person name="Kimata M."/>
            <person name="Watanabe M."/>
            <person name="Hiraoka S."/>
            <person name="Chiba Y."/>
            <person name="Ishida S."/>
            <person name="Ono Y."/>
            <person name="Takiguchi S."/>
            <person name="Watanabe S."/>
            <person name="Yosida M."/>
            <person name="Hotuta T."/>
            <person name="Kusano J."/>
            <person name="Kanehori K."/>
            <person name="Takahashi-Fujii A."/>
            <person name="Hara H."/>
            <person name="Tanase T.-O."/>
            <person name="Nomura Y."/>
            <person name="Togiya S."/>
            <person name="Komai F."/>
            <person name="Hara R."/>
            <person name="Takeuchi K."/>
            <person name="Arita M."/>
            <person name="Imose N."/>
            <person name="Musashino K."/>
            <person name="Yuuki H."/>
            <person name="Oshima A."/>
            <person name="Sasaki N."/>
            <person name="Aotsuka S."/>
            <person name="Yoshikawa Y."/>
            <person name="Matsunawa H."/>
            <person name="Ichihara T."/>
            <person name="Shiohata N."/>
            <person name="Sano S."/>
            <person name="Moriya S."/>
            <person name="Momiyama H."/>
            <person name="Satoh N."/>
            <person name="Takami S."/>
            <person name="Terashima Y."/>
            <person name="Suzuki O."/>
            <person name="Nakagawa S."/>
            <person name="Senoh A."/>
            <person name="Mizoguchi H."/>
            <person name="Goto Y."/>
            <person name="Shimizu F."/>
            <person name="Wakebe H."/>
            <person name="Hishigaki H."/>
            <person name="Watanabe T."/>
            <person name="Sugiyama A."/>
            <person name="Takemoto M."/>
            <person name="Kawakami B."/>
            <person name="Yamazaki M."/>
            <person name="Watanabe K."/>
            <person name="Kumagai A."/>
            <person name="Itakura S."/>
            <person name="Fukuzumi Y."/>
            <person name="Fujimori Y."/>
            <person name="Komiyama M."/>
            <person name="Tashiro H."/>
            <person name="Tanigami A."/>
            <person name="Fujiwara T."/>
            <person name="Ono T."/>
            <person name="Yamada K."/>
            <person name="Fujii Y."/>
            <person name="Ozaki K."/>
            <person name="Hirao M."/>
            <person name="Ohmori Y."/>
            <person name="Kawabata A."/>
            <person name="Hikiji T."/>
            <person name="Kobatake N."/>
            <person name="Inagaki H."/>
            <person name="Ikema Y."/>
            <person name="Okamoto S."/>
            <person name="Okitani R."/>
            <person name="Kawakami T."/>
            <person name="Noguchi S."/>
            <person name="Itoh T."/>
            <person name="Shigeta K."/>
            <person name="Senba T."/>
            <person name="Matsumura K."/>
            <person name="Nakajima Y."/>
            <person name="Mizuno T."/>
            <person name="Morinaga M."/>
            <person name="Sasaki M."/>
            <person name="Togashi T."/>
            <person name="Oyama M."/>
            <person name="Hata H."/>
            <person name="Watanabe M."/>
            <person name="Komatsu T."/>
            <person name="Mizushima-Sugano J."/>
            <person name="Satoh T."/>
            <person name="Shirai Y."/>
            <person name="Takahashi Y."/>
            <person name="Nakagawa K."/>
            <person name="Okumura K."/>
            <person name="Nagase T."/>
            <person name="Nomura N."/>
            <person name="Kikuchi H."/>
            <person name="Masuho Y."/>
            <person name="Yamashita R."/>
            <person name="Nakai K."/>
            <person name="Yada T."/>
            <person name="Nakamura Y."/>
            <person name="Ohara O."/>
            <person name="Isogai T."/>
            <person name="Sugano S."/>
        </authorList>
    </citation>
    <scope>NUCLEOTIDE SEQUENCE [LARGE SCALE MRNA] (ISOFORM 2)</scope>
    <source>
        <tissue>Thymus</tissue>
    </source>
</reference>
<reference key="4">
    <citation type="journal article" date="2005" name="Nature">
        <title>The DNA sequence of the human X chromosome.</title>
        <authorList>
            <person name="Ross M.T."/>
            <person name="Grafham D.V."/>
            <person name="Coffey A.J."/>
            <person name="Scherer S."/>
            <person name="McLay K."/>
            <person name="Muzny D."/>
            <person name="Platzer M."/>
            <person name="Howell G.R."/>
            <person name="Burrows C."/>
            <person name="Bird C.P."/>
            <person name="Frankish A."/>
            <person name="Lovell F.L."/>
            <person name="Howe K.L."/>
            <person name="Ashurst J.L."/>
            <person name="Fulton R.S."/>
            <person name="Sudbrak R."/>
            <person name="Wen G."/>
            <person name="Jones M.C."/>
            <person name="Hurles M.E."/>
            <person name="Andrews T.D."/>
            <person name="Scott C.E."/>
            <person name="Searle S."/>
            <person name="Ramser J."/>
            <person name="Whittaker A."/>
            <person name="Deadman R."/>
            <person name="Carter N.P."/>
            <person name="Hunt S.E."/>
            <person name="Chen R."/>
            <person name="Cree A."/>
            <person name="Gunaratne P."/>
            <person name="Havlak P."/>
            <person name="Hodgson A."/>
            <person name="Metzker M.L."/>
            <person name="Richards S."/>
            <person name="Scott G."/>
            <person name="Steffen D."/>
            <person name="Sodergren E."/>
            <person name="Wheeler D.A."/>
            <person name="Worley K.C."/>
            <person name="Ainscough R."/>
            <person name="Ambrose K.D."/>
            <person name="Ansari-Lari M.A."/>
            <person name="Aradhya S."/>
            <person name="Ashwell R.I."/>
            <person name="Babbage A.K."/>
            <person name="Bagguley C.L."/>
            <person name="Ballabio A."/>
            <person name="Banerjee R."/>
            <person name="Barker G.E."/>
            <person name="Barlow K.F."/>
            <person name="Barrett I.P."/>
            <person name="Bates K.N."/>
            <person name="Beare D.M."/>
            <person name="Beasley H."/>
            <person name="Beasley O."/>
            <person name="Beck A."/>
            <person name="Bethel G."/>
            <person name="Blechschmidt K."/>
            <person name="Brady N."/>
            <person name="Bray-Allen S."/>
            <person name="Bridgeman A.M."/>
            <person name="Brown A.J."/>
            <person name="Brown M.J."/>
            <person name="Bonnin D."/>
            <person name="Bruford E.A."/>
            <person name="Buhay C."/>
            <person name="Burch P."/>
            <person name="Burford D."/>
            <person name="Burgess J."/>
            <person name="Burrill W."/>
            <person name="Burton J."/>
            <person name="Bye J.M."/>
            <person name="Carder C."/>
            <person name="Carrel L."/>
            <person name="Chako J."/>
            <person name="Chapman J.C."/>
            <person name="Chavez D."/>
            <person name="Chen E."/>
            <person name="Chen G."/>
            <person name="Chen Y."/>
            <person name="Chen Z."/>
            <person name="Chinault C."/>
            <person name="Ciccodicola A."/>
            <person name="Clark S.Y."/>
            <person name="Clarke G."/>
            <person name="Clee C.M."/>
            <person name="Clegg S."/>
            <person name="Clerc-Blankenburg K."/>
            <person name="Clifford K."/>
            <person name="Cobley V."/>
            <person name="Cole C.G."/>
            <person name="Conquer J.S."/>
            <person name="Corby N."/>
            <person name="Connor R.E."/>
            <person name="David R."/>
            <person name="Davies J."/>
            <person name="Davis C."/>
            <person name="Davis J."/>
            <person name="Delgado O."/>
            <person name="Deshazo D."/>
            <person name="Dhami P."/>
            <person name="Ding Y."/>
            <person name="Dinh H."/>
            <person name="Dodsworth S."/>
            <person name="Draper H."/>
            <person name="Dugan-Rocha S."/>
            <person name="Dunham A."/>
            <person name="Dunn M."/>
            <person name="Durbin K.J."/>
            <person name="Dutta I."/>
            <person name="Eades T."/>
            <person name="Ellwood M."/>
            <person name="Emery-Cohen A."/>
            <person name="Errington H."/>
            <person name="Evans K.L."/>
            <person name="Faulkner L."/>
            <person name="Francis F."/>
            <person name="Frankland J."/>
            <person name="Fraser A.E."/>
            <person name="Galgoczy P."/>
            <person name="Gilbert J."/>
            <person name="Gill R."/>
            <person name="Gloeckner G."/>
            <person name="Gregory S.G."/>
            <person name="Gribble S."/>
            <person name="Griffiths C."/>
            <person name="Grocock R."/>
            <person name="Gu Y."/>
            <person name="Gwilliam R."/>
            <person name="Hamilton C."/>
            <person name="Hart E.A."/>
            <person name="Hawes A."/>
            <person name="Heath P.D."/>
            <person name="Heitmann K."/>
            <person name="Hennig S."/>
            <person name="Hernandez J."/>
            <person name="Hinzmann B."/>
            <person name="Ho S."/>
            <person name="Hoffs M."/>
            <person name="Howden P.J."/>
            <person name="Huckle E.J."/>
            <person name="Hume J."/>
            <person name="Hunt P.J."/>
            <person name="Hunt A.R."/>
            <person name="Isherwood J."/>
            <person name="Jacob L."/>
            <person name="Johnson D."/>
            <person name="Jones S."/>
            <person name="de Jong P.J."/>
            <person name="Joseph S.S."/>
            <person name="Keenan S."/>
            <person name="Kelly S."/>
            <person name="Kershaw J.K."/>
            <person name="Khan Z."/>
            <person name="Kioschis P."/>
            <person name="Klages S."/>
            <person name="Knights A.J."/>
            <person name="Kosiura A."/>
            <person name="Kovar-Smith C."/>
            <person name="Laird G.K."/>
            <person name="Langford C."/>
            <person name="Lawlor S."/>
            <person name="Leversha M."/>
            <person name="Lewis L."/>
            <person name="Liu W."/>
            <person name="Lloyd C."/>
            <person name="Lloyd D.M."/>
            <person name="Loulseged H."/>
            <person name="Loveland J.E."/>
            <person name="Lovell J.D."/>
            <person name="Lozado R."/>
            <person name="Lu J."/>
            <person name="Lyne R."/>
            <person name="Ma J."/>
            <person name="Maheshwari M."/>
            <person name="Matthews L.H."/>
            <person name="McDowall J."/>
            <person name="McLaren S."/>
            <person name="McMurray A."/>
            <person name="Meidl P."/>
            <person name="Meitinger T."/>
            <person name="Milne S."/>
            <person name="Miner G."/>
            <person name="Mistry S.L."/>
            <person name="Morgan M."/>
            <person name="Morris S."/>
            <person name="Mueller I."/>
            <person name="Mullikin J.C."/>
            <person name="Nguyen N."/>
            <person name="Nordsiek G."/>
            <person name="Nyakatura G."/>
            <person name="O'dell C.N."/>
            <person name="Okwuonu G."/>
            <person name="Palmer S."/>
            <person name="Pandian R."/>
            <person name="Parker D."/>
            <person name="Parrish J."/>
            <person name="Pasternak S."/>
            <person name="Patel D."/>
            <person name="Pearce A.V."/>
            <person name="Pearson D.M."/>
            <person name="Pelan S.E."/>
            <person name="Perez L."/>
            <person name="Porter K.M."/>
            <person name="Ramsey Y."/>
            <person name="Reichwald K."/>
            <person name="Rhodes S."/>
            <person name="Ridler K.A."/>
            <person name="Schlessinger D."/>
            <person name="Schueler M.G."/>
            <person name="Sehra H.K."/>
            <person name="Shaw-Smith C."/>
            <person name="Shen H."/>
            <person name="Sheridan E.M."/>
            <person name="Shownkeen R."/>
            <person name="Skuce C.D."/>
            <person name="Smith M.L."/>
            <person name="Sotheran E.C."/>
            <person name="Steingruber H.E."/>
            <person name="Steward C.A."/>
            <person name="Storey R."/>
            <person name="Swann R.M."/>
            <person name="Swarbreck D."/>
            <person name="Tabor P.E."/>
            <person name="Taudien S."/>
            <person name="Taylor T."/>
            <person name="Teague B."/>
            <person name="Thomas K."/>
            <person name="Thorpe A."/>
            <person name="Timms K."/>
            <person name="Tracey A."/>
            <person name="Trevanion S."/>
            <person name="Tromans A.C."/>
            <person name="d'Urso M."/>
            <person name="Verduzco D."/>
            <person name="Villasana D."/>
            <person name="Waldron L."/>
            <person name="Wall M."/>
            <person name="Wang Q."/>
            <person name="Warren J."/>
            <person name="Warry G.L."/>
            <person name="Wei X."/>
            <person name="West A."/>
            <person name="Whitehead S.L."/>
            <person name="Whiteley M.N."/>
            <person name="Wilkinson J.E."/>
            <person name="Willey D.L."/>
            <person name="Williams G."/>
            <person name="Williams L."/>
            <person name="Williamson A."/>
            <person name="Williamson H."/>
            <person name="Wilming L."/>
            <person name="Woodmansey R.L."/>
            <person name="Wray P.W."/>
            <person name="Yen J."/>
            <person name="Zhang J."/>
            <person name="Zhou J."/>
            <person name="Zoghbi H."/>
            <person name="Zorilla S."/>
            <person name="Buck D."/>
            <person name="Reinhardt R."/>
            <person name="Poustka A."/>
            <person name="Rosenthal A."/>
            <person name="Lehrach H."/>
            <person name="Meindl A."/>
            <person name="Minx P.J."/>
            <person name="Hillier L.W."/>
            <person name="Willard H.F."/>
            <person name="Wilson R.K."/>
            <person name="Waterston R.H."/>
            <person name="Rice C.M."/>
            <person name="Vaudin M."/>
            <person name="Coulson A."/>
            <person name="Nelson D.L."/>
            <person name="Weinstock G."/>
            <person name="Sulston J.E."/>
            <person name="Durbin R.M."/>
            <person name="Hubbard T."/>
            <person name="Gibbs R.A."/>
            <person name="Beck S."/>
            <person name="Rogers J."/>
            <person name="Bentley D.R."/>
        </authorList>
    </citation>
    <scope>NUCLEOTIDE SEQUENCE [LARGE SCALE GENOMIC DNA]</scope>
</reference>
<reference key="5">
    <citation type="submission" date="2005-07" db="EMBL/GenBank/DDBJ databases">
        <authorList>
            <person name="Mural R.J."/>
            <person name="Istrail S."/>
            <person name="Sutton G.G."/>
            <person name="Florea L."/>
            <person name="Halpern A.L."/>
            <person name="Mobarry C.M."/>
            <person name="Lippert R."/>
            <person name="Walenz B."/>
            <person name="Shatkay H."/>
            <person name="Dew I."/>
            <person name="Miller J.R."/>
            <person name="Flanigan M.J."/>
            <person name="Edwards N.J."/>
            <person name="Bolanos R."/>
            <person name="Fasulo D."/>
            <person name="Halldorsson B.V."/>
            <person name="Hannenhalli S."/>
            <person name="Turner R."/>
            <person name="Yooseph S."/>
            <person name="Lu F."/>
            <person name="Nusskern D.R."/>
            <person name="Shue B.C."/>
            <person name="Zheng X.H."/>
            <person name="Zhong F."/>
            <person name="Delcher A.L."/>
            <person name="Huson D.H."/>
            <person name="Kravitz S.A."/>
            <person name="Mouchard L."/>
            <person name="Reinert K."/>
            <person name="Remington K.A."/>
            <person name="Clark A.G."/>
            <person name="Waterman M.S."/>
            <person name="Eichler E.E."/>
            <person name="Adams M.D."/>
            <person name="Hunkapiller M.W."/>
            <person name="Myers E.W."/>
            <person name="Venter J.C."/>
        </authorList>
    </citation>
    <scope>NUCLEOTIDE SEQUENCE [LARGE SCALE GENOMIC DNA]</scope>
</reference>
<reference key="6">
    <citation type="journal article" date="2004" name="Genome Res.">
        <title>The status, quality, and expansion of the NIH full-length cDNA project: the Mammalian Gene Collection (MGC).</title>
        <authorList>
            <consortium name="The MGC Project Team"/>
        </authorList>
    </citation>
    <scope>NUCLEOTIDE SEQUENCE [LARGE SCALE MRNA] (ISOFORM 1)</scope>
    <source>
        <tissue>Colon</tissue>
        <tissue>Kidney</tissue>
    </source>
</reference>
<reference key="7">
    <citation type="journal article" date="1997" name="Genomics">
        <title>Sequence-based exon prediction around the synaptophysin locus reveals a gene-rich area containing novel genes in human proximal Xp.</title>
        <authorList>
            <person name="Fisher S.E."/>
            <person name="Ciccodicola A."/>
            <person name="Tanaka K."/>
            <person name="Curci A."/>
            <person name="Desicato S."/>
            <person name="D'Urso M."/>
            <person name="Craig I.W."/>
        </authorList>
    </citation>
    <scope>NUCLEOTIDE SEQUENCE [GENOMIC DNA] OF 69-615</scope>
</reference>
<reference key="8">
    <citation type="journal article" date="2008" name="Proc. Natl. Acad. Sci. U.S.A.">
        <title>A quantitative atlas of mitotic phosphorylation.</title>
        <authorList>
            <person name="Dephoure N."/>
            <person name="Zhou C."/>
            <person name="Villen J."/>
            <person name="Beausoleil S.A."/>
            <person name="Bakalarski C.E."/>
            <person name="Elledge S.J."/>
            <person name="Gygi S.P."/>
        </authorList>
    </citation>
    <scope>IDENTIFICATION BY MASS SPECTROMETRY [LARGE SCALE ANALYSIS]</scope>
    <source>
        <tissue>Cervix carcinoma</tissue>
    </source>
</reference>
<reference key="9">
    <citation type="journal article" date="2013" name="J. Proteome Res.">
        <title>Toward a comprehensive characterization of a human cancer cell phosphoproteome.</title>
        <authorList>
            <person name="Zhou H."/>
            <person name="Di Palma S."/>
            <person name="Preisinger C."/>
            <person name="Peng M."/>
            <person name="Polat A.N."/>
            <person name="Heck A.J."/>
            <person name="Mohammed S."/>
        </authorList>
    </citation>
    <scope>PHOSPHORYLATION [LARGE SCALE ANALYSIS] AT SER-475 AND SER-491</scope>
    <scope>IDENTIFICATION BY MASS SPECTROMETRY [LARGE SCALE ANALYSIS]</scope>
    <source>
        <tissue>Cervix carcinoma</tissue>
        <tissue>Erythroleukemia</tissue>
    </source>
</reference>
<reference key="10">
    <citation type="journal article" date="2006" name="Science">
        <title>The consensus coding sequences of human breast and colorectal cancers.</title>
        <authorList>
            <person name="Sjoeblom T."/>
            <person name="Jones S."/>
            <person name="Wood L.D."/>
            <person name="Parsons D.W."/>
            <person name="Lin J."/>
            <person name="Barber T.D."/>
            <person name="Mandelker D."/>
            <person name="Leary R.J."/>
            <person name="Ptak J."/>
            <person name="Silliman N."/>
            <person name="Szabo S."/>
            <person name="Buckhaults P."/>
            <person name="Farrell C."/>
            <person name="Meeh P."/>
            <person name="Markowitz S.D."/>
            <person name="Willis J."/>
            <person name="Dawson D."/>
            <person name="Willson J.K.V."/>
            <person name="Gazdar A.F."/>
            <person name="Hartigan J."/>
            <person name="Wu L."/>
            <person name="Liu C."/>
            <person name="Parmigiani G."/>
            <person name="Park B.H."/>
            <person name="Bachman K.E."/>
            <person name="Papadopoulos N."/>
            <person name="Vogelstein B."/>
            <person name="Kinzler K.W."/>
            <person name="Velculescu V.E."/>
        </authorList>
    </citation>
    <scope>VARIANT [LARGE SCALE ANALYSIS] ASP-558</scope>
</reference>
<reference key="11">
    <citation type="journal article" date="2020" name="J. Clin. Invest.">
        <title>PRICKLE3 linked to ATPase biogenesis manifested Leber's hereditary optic neuropathy.</title>
        <authorList>
            <person name="Yu J."/>
            <person name="Liang X."/>
            <person name="Ji Y."/>
            <person name="Ai C."/>
            <person name="Liu J."/>
            <person name="Zhu L."/>
            <person name="Nie Z."/>
            <person name="Jin X."/>
            <person name="Wang C."/>
            <person name="Zhang J."/>
            <person name="Zhao F."/>
            <person name="Mei S."/>
            <person name="Zhao X."/>
            <person name="Zhou X."/>
            <person name="Zhang M."/>
            <person name="Wang M."/>
            <person name="Huang T."/>
            <person name="Jiang P."/>
            <person name="Guan M.X."/>
        </authorList>
    </citation>
    <scope>VARIANT LOAM TRP-53</scope>
    <scope>INVOLVEMENT IN LOAM</scope>
    <scope>CHARACTERIZATION OF VARIANT LOAM TRP-53</scope>
    <scope>SUBCELLULAR LOCATION</scope>
    <scope>INTERACTION WITH MT-ATP8</scope>
    <scope>FUNCTION</scope>
</reference>
<protein>
    <recommendedName>
        <fullName evidence="9">Prickle planar cell polarity protein 3</fullName>
    </recommendedName>
    <alternativeName>
        <fullName>LIM domain only protein 6</fullName>
        <shortName>LMO-6</shortName>
    </alternativeName>
    <alternativeName>
        <fullName>Prickle-like protein 3</fullName>
        <shortName evidence="8">Pk3</shortName>
    </alternativeName>
    <alternativeName>
        <fullName>Triple LIM domain protein 6</fullName>
    </alternativeName>
</protein>